<gene>
    <name evidence="1" type="primary">ydiU</name>
    <name evidence="1" type="synonym">selO</name>
    <name type="ordered locus">SARI_01624</name>
</gene>
<comment type="function">
    <text evidence="1">Nucleotidyltransferase involved in the post-translational modification of proteins. It can catalyze the addition of adenosine monophosphate (AMP) or uridine monophosphate (UMP) to a protein, resulting in modifications known as AMPylation and UMPylation.</text>
</comment>
<comment type="catalytic activity">
    <reaction evidence="1">
        <text>L-seryl-[protein] + ATP = 3-O-(5'-adenylyl)-L-seryl-[protein] + diphosphate</text>
        <dbReference type="Rhea" id="RHEA:58120"/>
        <dbReference type="Rhea" id="RHEA-COMP:9863"/>
        <dbReference type="Rhea" id="RHEA-COMP:15073"/>
        <dbReference type="ChEBI" id="CHEBI:29999"/>
        <dbReference type="ChEBI" id="CHEBI:30616"/>
        <dbReference type="ChEBI" id="CHEBI:33019"/>
        <dbReference type="ChEBI" id="CHEBI:142516"/>
        <dbReference type="EC" id="2.7.7.108"/>
    </reaction>
</comment>
<comment type="catalytic activity">
    <reaction evidence="1">
        <text>L-threonyl-[protein] + ATP = 3-O-(5'-adenylyl)-L-threonyl-[protein] + diphosphate</text>
        <dbReference type="Rhea" id="RHEA:54292"/>
        <dbReference type="Rhea" id="RHEA-COMP:11060"/>
        <dbReference type="Rhea" id="RHEA-COMP:13847"/>
        <dbReference type="ChEBI" id="CHEBI:30013"/>
        <dbReference type="ChEBI" id="CHEBI:30616"/>
        <dbReference type="ChEBI" id="CHEBI:33019"/>
        <dbReference type="ChEBI" id="CHEBI:138113"/>
        <dbReference type="EC" id="2.7.7.108"/>
    </reaction>
</comment>
<comment type="catalytic activity">
    <reaction evidence="1">
        <text>L-tyrosyl-[protein] + ATP = O-(5'-adenylyl)-L-tyrosyl-[protein] + diphosphate</text>
        <dbReference type="Rhea" id="RHEA:54288"/>
        <dbReference type="Rhea" id="RHEA-COMP:10136"/>
        <dbReference type="Rhea" id="RHEA-COMP:13846"/>
        <dbReference type="ChEBI" id="CHEBI:30616"/>
        <dbReference type="ChEBI" id="CHEBI:33019"/>
        <dbReference type="ChEBI" id="CHEBI:46858"/>
        <dbReference type="ChEBI" id="CHEBI:83624"/>
        <dbReference type="EC" id="2.7.7.108"/>
    </reaction>
</comment>
<comment type="catalytic activity">
    <reaction evidence="1">
        <text>L-histidyl-[protein] + UTP = N(tele)-(5'-uridylyl)-L-histidyl-[protein] + diphosphate</text>
        <dbReference type="Rhea" id="RHEA:83891"/>
        <dbReference type="Rhea" id="RHEA-COMP:9745"/>
        <dbReference type="Rhea" id="RHEA-COMP:20239"/>
        <dbReference type="ChEBI" id="CHEBI:29979"/>
        <dbReference type="ChEBI" id="CHEBI:33019"/>
        <dbReference type="ChEBI" id="CHEBI:46398"/>
        <dbReference type="ChEBI" id="CHEBI:233474"/>
    </reaction>
</comment>
<comment type="catalytic activity">
    <reaction evidence="1">
        <text>L-seryl-[protein] + UTP = O-(5'-uridylyl)-L-seryl-[protein] + diphosphate</text>
        <dbReference type="Rhea" id="RHEA:64604"/>
        <dbReference type="Rhea" id="RHEA-COMP:9863"/>
        <dbReference type="Rhea" id="RHEA-COMP:16635"/>
        <dbReference type="ChEBI" id="CHEBI:29999"/>
        <dbReference type="ChEBI" id="CHEBI:33019"/>
        <dbReference type="ChEBI" id="CHEBI:46398"/>
        <dbReference type="ChEBI" id="CHEBI:156051"/>
    </reaction>
</comment>
<comment type="catalytic activity">
    <reaction evidence="1">
        <text>L-tyrosyl-[protein] + UTP = O-(5'-uridylyl)-L-tyrosyl-[protein] + diphosphate</text>
        <dbReference type="Rhea" id="RHEA:83887"/>
        <dbReference type="Rhea" id="RHEA-COMP:10136"/>
        <dbReference type="Rhea" id="RHEA-COMP:20238"/>
        <dbReference type="ChEBI" id="CHEBI:33019"/>
        <dbReference type="ChEBI" id="CHEBI:46398"/>
        <dbReference type="ChEBI" id="CHEBI:46858"/>
        <dbReference type="ChEBI" id="CHEBI:90602"/>
    </reaction>
</comment>
<comment type="cofactor">
    <cofactor evidence="1">
        <name>Mg(2+)</name>
        <dbReference type="ChEBI" id="CHEBI:18420"/>
    </cofactor>
    <cofactor evidence="1">
        <name>Mn(2+)</name>
        <dbReference type="ChEBI" id="CHEBI:29035"/>
    </cofactor>
</comment>
<comment type="similarity">
    <text evidence="1">Belongs to the SELO family.</text>
</comment>
<protein>
    <recommendedName>
        <fullName evidence="1">Protein nucleotidyltransferase YdiU</fullName>
        <ecNumber evidence="1">2.7.7.-</ecNumber>
    </recommendedName>
    <alternativeName>
        <fullName evidence="1">Protein adenylyltransferase YdiU</fullName>
        <ecNumber evidence="1">2.7.7.108</ecNumber>
    </alternativeName>
    <alternativeName>
        <fullName evidence="1">Protein uridylyltransferase YdiU</fullName>
        <ecNumber evidence="1">2.7.7.-</ecNumber>
    </alternativeName>
</protein>
<reference key="1">
    <citation type="submission" date="2007-11" db="EMBL/GenBank/DDBJ databases">
        <authorList>
            <consortium name="The Salmonella enterica serovar Arizonae Genome Sequencing Project"/>
            <person name="McClelland M."/>
            <person name="Sanderson E.K."/>
            <person name="Porwollik S."/>
            <person name="Spieth J."/>
            <person name="Clifton W.S."/>
            <person name="Fulton R."/>
            <person name="Chunyan W."/>
            <person name="Wollam A."/>
            <person name="Shah N."/>
            <person name="Pepin K."/>
            <person name="Bhonagiri V."/>
            <person name="Nash W."/>
            <person name="Johnson M."/>
            <person name="Thiruvilangam P."/>
            <person name="Wilson R."/>
        </authorList>
    </citation>
    <scope>NUCLEOTIDE SEQUENCE [LARGE SCALE GENOMIC DNA]</scope>
    <source>
        <strain>ATCC BAA-731 / CDC346-86 / RSK2980</strain>
    </source>
</reference>
<name>SELO_SALAR</name>
<organism>
    <name type="scientific">Salmonella arizonae (strain ATCC BAA-731 / CDC346-86 / RSK2980)</name>
    <dbReference type="NCBI Taxonomy" id="41514"/>
    <lineage>
        <taxon>Bacteria</taxon>
        <taxon>Pseudomonadati</taxon>
        <taxon>Pseudomonadota</taxon>
        <taxon>Gammaproteobacteria</taxon>
        <taxon>Enterobacterales</taxon>
        <taxon>Enterobacteriaceae</taxon>
        <taxon>Salmonella</taxon>
    </lineage>
</organism>
<evidence type="ECO:0000255" key="1">
    <source>
        <dbReference type="HAMAP-Rule" id="MF_00692"/>
    </source>
</evidence>
<sequence>MTLSFTAHWRDELPATYTALLPTPLKNARLIWYNDKLAQQLAIPASLFDVTNGAGVWGGETLLPGMSPVAQVYSGHQFGVWAGQLGDGRGILLGEQLLADGSTLDWHLKGAGLTPYSRMGDGRAVLRSTIRESLASEAMHYLGIPTTRALSIVTSDTPVQRETQEAGAMLMRLAQSHMRFGHFEHFYYRREPEKVQQLADFAIRHYWPQWQDAPEKYDLWFEEVAARTGRLIADWQTIGFAHGVMNTDNMSILGLTIDYGPFGFLDDYDPGFIGNHSDHQGRYRFDNQPSVALWNLQRLAQTLTPFIEIDALNRALDRYQDALLTRYGQRMRQKLGFFTEQKDDNVLLNELFSLMAREGSDYTRTFRMLSHTEQQSASSPLRDTFIDRAAFDGWFDRYRARLRTEAVDDALRQQQMQSVNPAVVLRNWLAQRAIDAAEQGDMAELHRLHEILRQPFIDRDDDYASRPPEWGKRLEVSCSS</sequence>
<feature type="chain" id="PRO_1000083135" description="Protein nucleotidyltransferase YdiU">
    <location>
        <begin position="1"/>
        <end position="480"/>
    </location>
</feature>
<feature type="active site" description="Proton acceptor" evidence="1">
    <location>
        <position position="248"/>
    </location>
</feature>
<feature type="binding site" evidence="1">
    <location>
        <position position="86"/>
    </location>
    <ligand>
        <name>ATP</name>
        <dbReference type="ChEBI" id="CHEBI:30616"/>
    </ligand>
</feature>
<feature type="binding site" evidence="1">
    <location>
        <position position="88"/>
    </location>
    <ligand>
        <name>ATP</name>
        <dbReference type="ChEBI" id="CHEBI:30616"/>
    </ligand>
</feature>
<feature type="binding site" evidence="1">
    <location>
        <position position="89"/>
    </location>
    <ligand>
        <name>ATP</name>
        <dbReference type="ChEBI" id="CHEBI:30616"/>
    </ligand>
</feature>
<feature type="binding site" evidence="1">
    <location>
        <position position="109"/>
    </location>
    <ligand>
        <name>ATP</name>
        <dbReference type="ChEBI" id="CHEBI:30616"/>
    </ligand>
</feature>
<feature type="binding site" evidence="1">
    <location>
        <position position="121"/>
    </location>
    <ligand>
        <name>ATP</name>
        <dbReference type="ChEBI" id="CHEBI:30616"/>
    </ligand>
</feature>
<feature type="binding site" evidence="1">
    <location>
        <position position="122"/>
    </location>
    <ligand>
        <name>ATP</name>
        <dbReference type="ChEBI" id="CHEBI:30616"/>
    </ligand>
</feature>
<feature type="binding site" evidence="1">
    <location>
        <position position="172"/>
    </location>
    <ligand>
        <name>ATP</name>
        <dbReference type="ChEBI" id="CHEBI:30616"/>
    </ligand>
</feature>
<feature type="binding site" evidence="1">
    <location>
        <position position="179"/>
    </location>
    <ligand>
        <name>ATP</name>
        <dbReference type="ChEBI" id="CHEBI:30616"/>
    </ligand>
</feature>
<feature type="binding site" evidence="1">
    <location>
        <position position="249"/>
    </location>
    <ligand>
        <name>Mg(2+)</name>
        <dbReference type="ChEBI" id="CHEBI:18420"/>
    </ligand>
</feature>
<feature type="binding site" evidence="1">
    <location>
        <position position="258"/>
    </location>
    <ligand>
        <name>ATP</name>
        <dbReference type="ChEBI" id="CHEBI:30616"/>
    </ligand>
</feature>
<feature type="binding site" evidence="1">
    <location>
        <position position="258"/>
    </location>
    <ligand>
        <name>Mg(2+)</name>
        <dbReference type="ChEBI" id="CHEBI:18420"/>
    </ligand>
</feature>
<accession>A9MEQ9</accession>
<dbReference type="EC" id="2.7.7.-" evidence="1"/>
<dbReference type="EC" id="2.7.7.108" evidence="1"/>
<dbReference type="EMBL" id="CP000880">
    <property type="protein sequence ID" value="ABX21516.1"/>
    <property type="molecule type" value="Genomic_DNA"/>
</dbReference>
<dbReference type="SMR" id="A9MEQ9"/>
<dbReference type="STRING" id="41514.SARI_01624"/>
<dbReference type="KEGG" id="ses:SARI_01624"/>
<dbReference type="HOGENOM" id="CLU_010245_4_1_6"/>
<dbReference type="Proteomes" id="UP000002084">
    <property type="component" value="Chromosome"/>
</dbReference>
<dbReference type="GO" id="GO:0070733">
    <property type="term" value="F:AMPylase activity"/>
    <property type="evidence" value="ECO:0007669"/>
    <property type="project" value="RHEA"/>
</dbReference>
<dbReference type="GO" id="GO:0005524">
    <property type="term" value="F:ATP binding"/>
    <property type="evidence" value="ECO:0007669"/>
    <property type="project" value="UniProtKB-UniRule"/>
</dbReference>
<dbReference type="GO" id="GO:0000287">
    <property type="term" value="F:magnesium ion binding"/>
    <property type="evidence" value="ECO:0007669"/>
    <property type="project" value="UniProtKB-UniRule"/>
</dbReference>
<dbReference type="HAMAP" id="MF_00692">
    <property type="entry name" value="YdiU_SelO"/>
    <property type="match status" value="1"/>
</dbReference>
<dbReference type="InterPro" id="IPR054838">
    <property type="entry name" value="adnlytase_SelO"/>
</dbReference>
<dbReference type="InterPro" id="IPR003846">
    <property type="entry name" value="SelO"/>
</dbReference>
<dbReference type="NCBIfam" id="NF040880">
    <property type="entry name" value="adnlytase_SelO"/>
    <property type="match status" value="1"/>
</dbReference>
<dbReference type="NCBIfam" id="NF000658">
    <property type="entry name" value="PRK00029.1"/>
    <property type="match status" value="1"/>
</dbReference>
<dbReference type="PANTHER" id="PTHR32057">
    <property type="entry name" value="PROTEIN ADENYLYLTRANSFERASE SELO, MITOCHONDRIAL"/>
    <property type="match status" value="1"/>
</dbReference>
<dbReference type="PANTHER" id="PTHR32057:SF14">
    <property type="entry name" value="PROTEIN ADENYLYLTRANSFERASE SELO, MITOCHONDRIAL"/>
    <property type="match status" value="1"/>
</dbReference>
<dbReference type="Pfam" id="PF02696">
    <property type="entry name" value="SelO"/>
    <property type="match status" value="1"/>
</dbReference>
<proteinExistence type="inferred from homology"/>
<keyword id="KW-0067">ATP-binding</keyword>
<keyword id="KW-0460">Magnesium</keyword>
<keyword id="KW-0464">Manganese</keyword>
<keyword id="KW-0479">Metal-binding</keyword>
<keyword id="KW-0547">Nucleotide-binding</keyword>
<keyword id="KW-0548">Nucleotidyltransferase</keyword>
<keyword id="KW-1185">Reference proteome</keyword>
<keyword id="KW-0808">Transferase</keyword>